<gene>
    <name evidence="1" type="primary">dapB</name>
    <name type="ordered locus">VFMJ11_0470</name>
</gene>
<dbReference type="EC" id="1.17.1.8" evidence="1"/>
<dbReference type="EMBL" id="CP001139">
    <property type="protein sequence ID" value="ACH65642.1"/>
    <property type="molecule type" value="Genomic_DNA"/>
</dbReference>
<dbReference type="RefSeq" id="WP_005417649.1">
    <property type="nucleotide sequence ID" value="NC_011184.1"/>
</dbReference>
<dbReference type="SMR" id="B5FA64"/>
<dbReference type="GeneID" id="54163107"/>
<dbReference type="KEGG" id="vfm:VFMJ11_0470"/>
<dbReference type="HOGENOM" id="CLU_047479_2_1_6"/>
<dbReference type="UniPathway" id="UPA00034">
    <property type="reaction ID" value="UER00018"/>
</dbReference>
<dbReference type="Proteomes" id="UP000001857">
    <property type="component" value="Chromosome I"/>
</dbReference>
<dbReference type="GO" id="GO:0005829">
    <property type="term" value="C:cytosol"/>
    <property type="evidence" value="ECO:0007669"/>
    <property type="project" value="TreeGrafter"/>
</dbReference>
<dbReference type="GO" id="GO:0008839">
    <property type="term" value="F:4-hydroxy-tetrahydrodipicolinate reductase"/>
    <property type="evidence" value="ECO:0007669"/>
    <property type="project" value="UniProtKB-EC"/>
</dbReference>
<dbReference type="GO" id="GO:0051287">
    <property type="term" value="F:NAD binding"/>
    <property type="evidence" value="ECO:0007669"/>
    <property type="project" value="UniProtKB-UniRule"/>
</dbReference>
<dbReference type="GO" id="GO:0050661">
    <property type="term" value="F:NADP binding"/>
    <property type="evidence" value="ECO:0007669"/>
    <property type="project" value="UniProtKB-UniRule"/>
</dbReference>
<dbReference type="GO" id="GO:0016726">
    <property type="term" value="F:oxidoreductase activity, acting on CH or CH2 groups, NAD or NADP as acceptor"/>
    <property type="evidence" value="ECO:0007669"/>
    <property type="project" value="UniProtKB-UniRule"/>
</dbReference>
<dbReference type="GO" id="GO:0019877">
    <property type="term" value="P:diaminopimelate biosynthetic process"/>
    <property type="evidence" value="ECO:0007669"/>
    <property type="project" value="UniProtKB-UniRule"/>
</dbReference>
<dbReference type="GO" id="GO:0009089">
    <property type="term" value="P:lysine biosynthetic process via diaminopimelate"/>
    <property type="evidence" value="ECO:0007669"/>
    <property type="project" value="UniProtKB-UniRule"/>
</dbReference>
<dbReference type="CDD" id="cd02274">
    <property type="entry name" value="DHDPR_N"/>
    <property type="match status" value="1"/>
</dbReference>
<dbReference type="FunFam" id="3.30.360.10:FF:000004">
    <property type="entry name" value="4-hydroxy-tetrahydrodipicolinate reductase"/>
    <property type="match status" value="1"/>
</dbReference>
<dbReference type="FunFam" id="3.40.50.720:FF:000048">
    <property type="entry name" value="4-hydroxy-tetrahydrodipicolinate reductase"/>
    <property type="match status" value="1"/>
</dbReference>
<dbReference type="Gene3D" id="3.30.360.10">
    <property type="entry name" value="Dihydrodipicolinate Reductase, domain 2"/>
    <property type="match status" value="1"/>
</dbReference>
<dbReference type="Gene3D" id="3.40.50.720">
    <property type="entry name" value="NAD(P)-binding Rossmann-like Domain"/>
    <property type="match status" value="1"/>
</dbReference>
<dbReference type="HAMAP" id="MF_00102">
    <property type="entry name" value="DapB"/>
    <property type="match status" value="1"/>
</dbReference>
<dbReference type="InterPro" id="IPR022663">
    <property type="entry name" value="DapB_C"/>
</dbReference>
<dbReference type="InterPro" id="IPR000846">
    <property type="entry name" value="DapB_N"/>
</dbReference>
<dbReference type="InterPro" id="IPR022664">
    <property type="entry name" value="DapB_N_CS"/>
</dbReference>
<dbReference type="InterPro" id="IPR023940">
    <property type="entry name" value="DHDPR_bac"/>
</dbReference>
<dbReference type="InterPro" id="IPR036291">
    <property type="entry name" value="NAD(P)-bd_dom_sf"/>
</dbReference>
<dbReference type="NCBIfam" id="TIGR00036">
    <property type="entry name" value="dapB"/>
    <property type="match status" value="1"/>
</dbReference>
<dbReference type="PANTHER" id="PTHR20836:SF0">
    <property type="entry name" value="4-HYDROXY-TETRAHYDRODIPICOLINATE REDUCTASE 1, CHLOROPLASTIC-RELATED"/>
    <property type="match status" value="1"/>
</dbReference>
<dbReference type="PANTHER" id="PTHR20836">
    <property type="entry name" value="DIHYDRODIPICOLINATE REDUCTASE"/>
    <property type="match status" value="1"/>
</dbReference>
<dbReference type="Pfam" id="PF05173">
    <property type="entry name" value="DapB_C"/>
    <property type="match status" value="1"/>
</dbReference>
<dbReference type="Pfam" id="PF01113">
    <property type="entry name" value="DapB_N"/>
    <property type="match status" value="1"/>
</dbReference>
<dbReference type="PIRSF" id="PIRSF000161">
    <property type="entry name" value="DHPR"/>
    <property type="match status" value="1"/>
</dbReference>
<dbReference type="SUPFAM" id="SSF55347">
    <property type="entry name" value="Glyceraldehyde-3-phosphate dehydrogenase-like, C-terminal domain"/>
    <property type="match status" value="1"/>
</dbReference>
<dbReference type="SUPFAM" id="SSF51735">
    <property type="entry name" value="NAD(P)-binding Rossmann-fold domains"/>
    <property type="match status" value="1"/>
</dbReference>
<dbReference type="PROSITE" id="PS01298">
    <property type="entry name" value="DAPB"/>
    <property type="match status" value="1"/>
</dbReference>
<reference key="1">
    <citation type="submission" date="2008-08" db="EMBL/GenBank/DDBJ databases">
        <title>Complete sequence of Vibrio fischeri strain MJ11.</title>
        <authorList>
            <person name="Mandel M.J."/>
            <person name="Stabb E.V."/>
            <person name="Ruby E.G."/>
            <person name="Ferriera S."/>
            <person name="Johnson J."/>
            <person name="Kravitz S."/>
            <person name="Beeson K."/>
            <person name="Sutton G."/>
            <person name="Rogers Y.-H."/>
            <person name="Friedman R."/>
            <person name="Frazier M."/>
            <person name="Venter J.C."/>
        </authorList>
    </citation>
    <scope>NUCLEOTIDE SEQUENCE [LARGE SCALE GENOMIC DNA]</scope>
    <source>
        <strain>MJ11</strain>
    </source>
</reference>
<name>DAPB_ALIFM</name>
<evidence type="ECO:0000255" key="1">
    <source>
        <dbReference type="HAMAP-Rule" id="MF_00102"/>
    </source>
</evidence>
<evidence type="ECO:0000305" key="2"/>
<accession>B5FA64</accession>
<keyword id="KW-0028">Amino-acid biosynthesis</keyword>
<keyword id="KW-0963">Cytoplasm</keyword>
<keyword id="KW-0220">Diaminopimelate biosynthesis</keyword>
<keyword id="KW-0457">Lysine biosynthesis</keyword>
<keyword id="KW-0520">NAD</keyword>
<keyword id="KW-0521">NADP</keyword>
<keyword id="KW-0560">Oxidoreductase</keyword>
<feature type="chain" id="PRO_1000094017" description="4-hydroxy-tetrahydrodipicolinate reductase">
    <location>
        <begin position="1"/>
        <end position="269"/>
    </location>
</feature>
<feature type="active site" description="Proton donor/acceptor" evidence="1">
    <location>
        <position position="155"/>
    </location>
</feature>
<feature type="active site" description="Proton donor" evidence="1">
    <location>
        <position position="159"/>
    </location>
</feature>
<feature type="binding site" evidence="1">
    <location>
        <begin position="8"/>
        <end position="13"/>
    </location>
    <ligand>
        <name>NAD(+)</name>
        <dbReference type="ChEBI" id="CHEBI:57540"/>
    </ligand>
</feature>
<feature type="binding site" evidence="1">
    <location>
        <position position="34"/>
    </location>
    <ligand>
        <name>NAD(+)</name>
        <dbReference type="ChEBI" id="CHEBI:57540"/>
    </ligand>
</feature>
<feature type="binding site" evidence="1">
    <location>
        <position position="35"/>
    </location>
    <ligand>
        <name>NADP(+)</name>
        <dbReference type="ChEBI" id="CHEBI:58349"/>
    </ligand>
</feature>
<feature type="binding site" evidence="1">
    <location>
        <begin position="98"/>
        <end position="100"/>
    </location>
    <ligand>
        <name>NAD(+)</name>
        <dbReference type="ChEBI" id="CHEBI:57540"/>
    </ligand>
</feature>
<feature type="binding site" evidence="1">
    <location>
        <begin position="122"/>
        <end position="125"/>
    </location>
    <ligand>
        <name>NAD(+)</name>
        <dbReference type="ChEBI" id="CHEBI:57540"/>
    </ligand>
</feature>
<feature type="binding site" evidence="1">
    <location>
        <position position="156"/>
    </location>
    <ligand>
        <name>(S)-2,3,4,5-tetrahydrodipicolinate</name>
        <dbReference type="ChEBI" id="CHEBI:16845"/>
    </ligand>
</feature>
<feature type="binding site" evidence="1">
    <location>
        <begin position="165"/>
        <end position="166"/>
    </location>
    <ligand>
        <name>(S)-2,3,4,5-tetrahydrodipicolinate</name>
        <dbReference type="ChEBI" id="CHEBI:16845"/>
    </ligand>
</feature>
<comment type="function">
    <text evidence="1">Catalyzes the conversion of 4-hydroxy-tetrahydrodipicolinate (HTPA) to tetrahydrodipicolinate.</text>
</comment>
<comment type="catalytic activity">
    <reaction evidence="1">
        <text>(S)-2,3,4,5-tetrahydrodipicolinate + NAD(+) + H2O = (2S,4S)-4-hydroxy-2,3,4,5-tetrahydrodipicolinate + NADH + H(+)</text>
        <dbReference type="Rhea" id="RHEA:35323"/>
        <dbReference type="ChEBI" id="CHEBI:15377"/>
        <dbReference type="ChEBI" id="CHEBI:15378"/>
        <dbReference type="ChEBI" id="CHEBI:16845"/>
        <dbReference type="ChEBI" id="CHEBI:57540"/>
        <dbReference type="ChEBI" id="CHEBI:57945"/>
        <dbReference type="ChEBI" id="CHEBI:67139"/>
        <dbReference type="EC" id="1.17.1.8"/>
    </reaction>
</comment>
<comment type="catalytic activity">
    <reaction evidence="1">
        <text>(S)-2,3,4,5-tetrahydrodipicolinate + NADP(+) + H2O = (2S,4S)-4-hydroxy-2,3,4,5-tetrahydrodipicolinate + NADPH + H(+)</text>
        <dbReference type="Rhea" id="RHEA:35331"/>
        <dbReference type="ChEBI" id="CHEBI:15377"/>
        <dbReference type="ChEBI" id="CHEBI:15378"/>
        <dbReference type="ChEBI" id="CHEBI:16845"/>
        <dbReference type="ChEBI" id="CHEBI:57783"/>
        <dbReference type="ChEBI" id="CHEBI:58349"/>
        <dbReference type="ChEBI" id="CHEBI:67139"/>
        <dbReference type="EC" id="1.17.1.8"/>
    </reaction>
</comment>
<comment type="pathway">
    <text evidence="1">Amino-acid biosynthesis; L-lysine biosynthesis via DAP pathway; (S)-tetrahydrodipicolinate from L-aspartate: step 4/4.</text>
</comment>
<comment type="subcellular location">
    <subcellularLocation>
        <location evidence="1">Cytoplasm</location>
    </subcellularLocation>
</comment>
<comment type="similarity">
    <text evidence="1">Belongs to the DapB family.</text>
</comment>
<comment type="caution">
    <text evidence="2">Was originally thought to be a dihydrodipicolinate reductase (DHDPR), catalyzing the conversion of dihydrodipicolinate to tetrahydrodipicolinate. However, it was shown in E.coli that the substrate of the enzymatic reaction is not dihydrodipicolinate (DHDP) but in fact (2S,4S)-4-hydroxy-2,3,4,5-tetrahydrodipicolinic acid (HTPA), the product released by the DapA-catalyzed reaction.</text>
</comment>
<organism>
    <name type="scientific">Aliivibrio fischeri (strain MJ11)</name>
    <name type="common">Vibrio fischeri</name>
    <dbReference type="NCBI Taxonomy" id="388396"/>
    <lineage>
        <taxon>Bacteria</taxon>
        <taxon>Pseudomonadati</taxon>
        <taxon>Pseudomonadota</taxon>
        <taxon>Gammaproteobacteria</taxon>
        <taxon>Vibrionales</taxon>
        <taxon>Vibrionaceae</taxon>
        <taxon>Aliivibrio</taxon>
    </lineage>
</organism>
<proteinExistence type="inferred from homology"/>
<protein>
    <recommendedName>
        <fullName evidence="1">4-hydroxy-tetrahydrodipicolinate reductase</fullName>
        <shortName evidence="1">HTPA reductase</shortName>
        <ecNumber evidence="1">1.17.1.8</ecNumber>
    </recommendedName>
</protein>
<sequence length="269" mass="28795">MVRVAIAGAAGRMGRNLIKAVNGSQFAVLAAASERPESSLIGVDVGEMAGLGKSGILIVDDLAKVTDDFDVIIDFTLPISTLKNIELCQEHNKAIVIGTTGFSEPGKEIIDQASKEIPVVMAPNYSVGVNLVFKLLEKAAKVMGDYCDIEIVEAHHRYKVDAPSGTAIGMGEAIAGAMGNKLEDVAVYAREGITGERSKDEIGFATIRAGDIVGEHTAMFADIGERVEITHKATDRMTFANGAVRASHWLHKKEPGFYTMHDVLNLDQI</sequence>